<gene>
    <name evidence="1" type="primary">symE</name>
    <name type="ordered locus">STY4880</name>
    <name type="ordered locus">t4573</name>
</gene>
<sequence>MTTVHSIADPCDPEVSPTNNRHLTVSYASRYPDYTRIPALTMKGQWLEAAGFATGTEVDVRVMNGCIVLTAQQPQPEESELMQSLRQACKLSARKQKQVQAFISVMAGSK</sequence>
<proteinExistence type="inferred from homology"/>
<organism>
    <name type="scientific">Salmonella typhi</name>
    <dbReference type="NCBI Taxonomy" id="90370"/>
    <lineage>
        <taxon>Bacteria</taxon>
        <taxon>Pseudomonadati</taxon>
        <taxon>Pseudomonadota</taxon>
        <taxon>Gammaproteobacteria</taxon>
        <taxon>Enterobacterales</taxon>
        <taxon>Enterobacteriaceae</taxon>
        <taxon>Salmonella</taxon>
    </lineage>
</organism>
<reference key="1">
    <citation type="journal article" date="2001" name="Nature">
        <title>Complete genome sequence of a multiple drug resistant Salmonella enterica serovar Typhi CT18.</title>
        <authorList>
            <person name="Parkhill J."/>
            <person name="Dougan G."/>
            <person name="James K.D."/>
            <person name="Thomson N.R."/>
            <person name="Pickard D."/>
            <person name="Wain J."/>
            <person name="Churcher C.M."/>
            <person name="Mungall K.L."/>
            <person name="Bentley S.D."/>
            <person name="Holden M.T.G."/>
            <person name="Sebaihia M."/>
            <person name="Baker S."/>
            <person name="Basham D."/>
            <person name="Brooks K."/>
            <person name="Chillingworth T."/>
            <person name="Connerton P."/>
            <person name="Cronin A."/>
            <person name="Davis P."/>
            <person name="Davies R.M."/>
            <person name="Dowd L."/>
            <person name="White N."/>
            <person name="Farrar J."/>
            <person name="Feltwell T."/>
            <person name="Hamlin N."/>
            <person name="Haque A."/>
            <person name="Hien T.T."/>
            <person name="Holroyd S."/>
            <person name="Jagels K."/>
            <person name="Krogh A."/>
            <person name="Larsen T.S."/>
            <person name="Leather S."/>
            <person name="Moule S."/>
            <person name="O'Gaora P."/>
            <person name="Parry C."/>
            <person name="Quail M.A."/>
            <person name="Rutherford K.M."/>
            <person name="Simmonds M."/>
            <person name="Skelton J."/>
            <person name="Stevens K."/>
            <person name="Whitehead S."/>
            <person name="Barrell B.G."/>
        </authorList>
    </citation>
    <scope>NUCLEOTIDE SEQUENCE [LARGE SCALE GENOMIC DNA]</scope>
    <source>
        <strain>CT18</strain>
    </source>
</reference>
<reference key="2">
    <citation type="journal article" date="2003" name="J. Bacteriol.">
        <title>Comparative genomics of Salmonella enterica serovar Typhi strains Ty2 and CT18.</title>
        <authorList>
            <person name="Deng W."/>
            <person name="Liou S.-R."/>
            <person name="Plunkett G. III"/>
            <person name="Mayhew G.F."/>
            <person name="Rose D.J."/>
            <person name="Burland V."/>
            <person name="Kodoyianni V."/>
            <person name="Schwartz D.C."/>
            <person name="Blattner F.R."/>
        </authorList>
    </citation>
    <scope>NUCLEOTIDE SEQUENCE [LARGE SCALE GENOMIC DNA]</scope>
    <source>
        <strain>ATCC 700931 / Ty2</strain>
    </source>
</reference>
<name>SYME_SALTI</name>
<comment type="function">
    <text evidence="1">Involved in the degradation and recycling of damaged RNA. It is itself a target for degradation by the ATP-dependent protease Lon.</text>
</comment>
<comment type="subcellular location">
    <subcellularLocation>
        <location evidence="1">Cytoplasm</location>
    </subcellularLocation>
</comment>
<comment type="similarity">
    <text evidence="1">Belongs to the SymE family.</text>
</comment>
<comment type="sequence caution" evidence="3">
    <conflict type="erroneous initiation">
        <sequence resource="EMBL-CDS" id="AAO72010"/>
    </conflict>
</comment>
<comment type="sequence caution" evidence="3">
    <conflict type="erroneous initiation">
        <sequence resource="EMBL-CDS" id="CAD03368"/>
    </conflict>
</comment>
<evidence type="ECO:0000255" key="1">
    <source>
        <dbReference type="HAMAP-Rule" id="MF_01193"/>
    </source>
</evidence>
<evidence type="ECO:0000255" key="2">
    <source>
        <dbReference type="PROSITE-ProRule" id="PRU01076"/>
    </source>
</evidence>
<evidence type="ECO:0000305" key="3"/>
<protein>
    <recommendedName>
        <fullName evidence="1">Endoribonuclease SymE</fullName>
        <ecNumber evidence="1">3.1.-.-</ecNumber>
    </recommendedName>
</protein>
<feature type="chain" id="PRO_0000297825" description="Endoribonuclease SymE">
    <location>
        <begin position="1"/>
        <end position="110"/>
    </location>
</feature>
<feature type="domain" description="SpoVT-AbrB" evidence="2">
    <location>
        <begin position="29"/>
        <end position="74"/>
    </location>
</feature>
<accession>Q8Z0W8</accession>
<accession>Q7C4V8</accession>
<dbReference type="EC" id="3.1.-.-" evidence="1"/>
<dbReference type="EMBL" id="AE014613">
    <property type="protein sequence ID" value="AAO72010.1"/>
    <property type="status" value="ALT_INIT"/>
    <property type="molecule type" value="Genomic_DNA"/>
</dbReference>
<dbReference type="EMBL" id="AL513382">
    <property type="protein sequence ID" value="CAD03368.1"/>
    <property type="status" value="ALT_INIT"/>
    <property type="molecule type" value="Genomic_DNA"/>
</dbReference>
<dbReference type="RefSeq" id="NP_458947.1">
    <property type="nucleotide sequence ID" value="NC_003198.1"/>
</dbReference>
<dbReference type="RefSeq" id="WP_001681523.1">
    <property type="nucleotide sequence ID" value="NZ_WSUR01000016.1"/>
</dbReference>
<dbReference type="SMR" id="Q8Z0W8"/>
<dbReference type="STRING" id="220341.gene:17588699"/>
<dbReference type="KEGG" id="stt:t4573"/>
<dbReference type="KEGG" id="sty:STY4880"/>
<dbReference type="PATRIC" id="fig|220341.7.peg.5002"/>
<dbReference type="eggNOG" id="ENOG5031VID">
    <property type="taxonomic scope" value="Bacteria"/>
</dbReference>
<dbReference type="HOGENOM" id="CLU_151239_0_0_6"/>
<dbReference type="OMA" id="MRQHTRT"/>
<dbReference type="OrthoDB" id="6053337at2"/>
<dbReference type="Proteomes" id="UP000000541">
    <property type="component" value="Chromosome"/>
</dbReference>
<dbReference type="Proteomes" id="UP000002670">
    <property type="component" value="Chromosome"/>
</dbReference>
<dbReference type="GO" id="GO:0005737">
    <property type="term" value="C:cytoplasm"/>
    <property type="evidence" value="ECO:0007669"/>
    <property type="project" value="UniProtKB-SubCell"/>
</dbReference>
<dbReference type="GO" id="GO:0003677">
    <property type="term" value="F:DNA binding"/>
    <property type="evidence" value="ECO:0007669"/>
    <property type="project" value="UniProtKB-KW"/>
</dbReference>
<dbReference type="GO" id="GO:0003723">
    <property type="term" value="F:RNA binding"/>
    <property type="evidence" value="ECO:0007669"/>
    <property type="project" value="UniProtKB-KW"/>
</dbReference>
<dbReference type="GO" id="GO:0004521">
    <property type="term" value="F:RNA endonuclease activity"/>
    <property type="evidence" value="ECO:0007669"/>
    <property type="project" value="UniProtKB-UniRule"/>
</dbReference>
<dbReference type="GO" id="GO:0016070">
    <property type="term" value="P:RNA metabolic process"/>
    <property type="evidence" value="ECO:0007669"/>
    <property type="project" value="InterPro"/>
</dbReference>
<dbReference type="HAMAP" id="MF_01193">
    <property type="entry name" value="Endoribonucl_SymE"/>
    <property type="match status" value="1"/>
</dbReference>
<dbReference type="InterPro" id="IPR007159">
    <property type="entry name" value="SpoVT-AbrB_dom"/>
</dbReference>
<dbReference type="InterPro" id="IPR014944">
    <property type="entry name" value="Toxin_SymE-like"/>
</dbReference>
<dbReference type="InterPro" id="IPR020883">
    <property type="entry name" value="TypeI_TA_SymE"/>
</dbReference>
<dbReference type="NCBIfam" id="NF010128">
    <property type="entry name" value="PRK13605.1"/>
    <property type="match status" value="1"/>
</dbReference>
<dbReference type="Pfam" id="PF08845">
    <property type="entry name" value="SymE_toxin"/>
    <property type="match status" value="1"/>
</dbReference>
<dbReference type="PROSITE" id="PS51740">
    <property type="entry name" value="SPOVT_ABRB"/>
    <property type="match status" value="1"/>
</dbReference>
<keyword id="KW-0963">Cytoplasm</keyword>
<keyword id="KW-0238">DNA-binding</keyword>
<keyword id="KW-0255">Endonuclease</keyword>
<keyword id="KW-0378">Hydrolase</keyword>
<keyword id="KW-0540">Nuclease</keyword>
<keyword id="KW-0694">RNA-binding</keyword>